<name>DMAS1_HORVU</name>
<reference key="1">
    <citation type="journal article" date="2006" name="J. Biol. Chem.">
        <title>Cloning and characterization of deoxymugineic acid synthase genes from graminaceous plants.</title>
        <authorList>
            <person name="Bashir K."/>
            <person name="Inoue H."/>
            <person name="Nagasaka S."/>
            <person name="Takahashi M."/>
            <person name="Nakanishi H."/>
            <person name="Mori S."/>
            <person name="Nishizawa N.K."/>
        </authorList>
    </citation>
    <scope>NUCLEOTIDE SEQUENCE [MRNA]</scope>
    <scope>FUNCTION</scope>
    <scope>PATHWAY</scope>
    <scope>CATALYTIC ACTIVITY</scope>
    <scope>BIOPHYSICOCHEMICAL PROPERTIES</scope>
    <scope>INDUCTION BY IRON-DEFICIENCY</scope>
    <source>
        <strain>cv. Ehimehadaka No.1</strain>
    </source>
</reference>
<reference key="2">
    <citation type="journal article" date="1990" name="Plant Physiol.">
        <title>Biosynthesis of phytosiderophores: in vitro biosynthesis of 2'-deoxymugineic acid from l-methionine and nicotianamine.</title>
        <authorList>
            <person name="Shojima S."/>
            <person name="Nishizawa N.-K."/>
            <person name="Fushiya S."/>
            <person name="Nozoe S."/>
            <person name="Irifune T."/>
            <person name="Mori S."/>
        </authorList>
    </citation>
    <scope>FUNCTION</scope>
    <scope>BIOPHYSICOCHEMICAL PROPERTIES</scope>
    <scope>CATALYTIC ACTIVITY</scope>
    <source>
        <strain>cv. Ehimehadakamugi No. 1</strain>
    </source>
</reference>
<sequence length="314" mass="35155">MGAGDRTVAGMPRIGMGTAVQGPKPDPIRRAVLRAIEIGYRHFDTAAHYETEAPIGEAAAEAVRSGAVASRDDLFITSKLWCSDAHGDRVVPALRHTLRNLQMEYVDLYLVHWPVSMKPGRFKAPFTAEDFVPFDMRAVWEAMEECHRLGLAKAIGVANFSCKKLDTLLSFATIPPTVNQVEVNPVWQQRKLREFCRGKGIQLCAYSPLGAKGTHWGSDAVMDAGVLQDIAASRGKSVAQVCLRWVYEQGDCLIVKSFDEARMRENLDVDGWELTEEERRRIAEIPQRKINLGKRYVSDHGPYKSLEELWDGEI</sequence>
<organism>
    <name type="scientific">Hordeum vulgare</name>
    <name type="common">Barley</name>
    <dbReference type="NCBI Taxonomy" id="4513"/>
    <lineage>
        <taxon>Eukaryota</taxon>
        <taxon>Viridiplantae</taxon>
        <taxon>Streptophyta</taxon>
        <taxon>Embryophyta</taxon>
        <taxon>Tracheophyta</taxon>
        <taxon>Spermatophyta</taxon>
        <taxon>Magnoliopsida</taxon>
        <taxon>Liliopsida</taxon>
        <taxon>Poales</taxon>
        <taxon>Poaceae</taxon>
        <taxon>BOP clade</taxon>
        <taxon>Pooideae</taxon>
        <taxon>Triticodae</taxon>
        <taxon>Triticeae</taxon>
        <taxon>Hordeinae</taxon>
        <taxon>Hordeum</taxon>
    </lineage>
</organism>
<feature type="chain" id="PRO_0000442301" description="Deoxymugineic acid synthase 1">
    <location>
        <begin position="1"/>
        <end position="314"/>
    </location>
</feature>
<feature type="region of interest" description="Disordered" evidence="4">
    <location>
        <begin position="1"/>
        <end position="21"/>
    </location>
</feature>
<feature type="active site" description="Proton donor" evidence="2">
    <location>
        <position position="49"/>
    </location>
</feature>
<feature type="binding site" evidence="1">
    <location>
        <position position="44"/>
    </location>
    <ligand>
        <name>NADP(+)</name>
        <dbReference type="ChEBI" id="CHEBI:58349"/>
    </ligand>
</feature>
<feature type="binding site" evidence="2">
    <location>
        <position position="112"/>
    </location>
    <ligand>
        <name>substrate</name>
    </ligand>
</feature>
<feature type="binding site" evidence="1">
    <location>
        <begin position="158"/>
        <end position="159"/>
    </location>
    <ligand>
        <name>NADP(+)</name>
        <dbReference type="ChEBI" id="CHEBI:58349"/>
    </ligand>
</feature>
<feature type="binding site" evidence="1">
    <location>
        <position position="180"/>
    </location>
    <ligand>
        <name>NADP(+)</name>
        <dbReference type="ChEBI" id="CHEBI:58349"/>
    </ligand>
</feature>
<feature type="binding site" evidence="1">
    <location>
        <begin position="258"/>
        <end position="266"/>
    </location>
    <ligand>
        <name>NADP(+)</name>
        <dbReference type="ChEBI" id="CHEBI:58349"/>
    </ligand>
</feature>
<feature type="binding site" evidence="2">
    <location>
        <begin position="273"/>
        <end position="281"/>
    </location>
    <ligand>
        <name>NADP(+)</name>
        <dbReference type="ChEBI" id="CHEBI:58349"/>
    </ligand>
</feature>
<feature type="site" description="Lowers pKa of active site Tyr" evidence="3">
    <location>
        <position position="79"/>
    </location>
</feature>
<accession>Q0PCF4</accession>
<dbReference type="EC" id="1.1.1.285" evidence="5 6"/>
<dbReference type="EMBL" id="AB269907">
    <property type="protein sequence ID" value="BAF03162.1"/>
    <property type="molecule type" value="mRNA"/>
</dbReference>
<dbReference type="SMR" id="Q0PCF4"/>
<dbReference type="BioCyc" id="MetaCyc:MONOMER-13968"/>
<dbReference type="ExpressionAtlas" id="Q0PCF4">
    <property type="expression patterns" value="baseline and differential"/>
</dbReference>
<dbReference type="GO" id="GO:0033707">
    <property type="term" value="F:3''-deamino-3''-oxonicotianamine reductase activity"/>
    <property type="evidence" value="ECO:0000314"/>
    <property type="project" value="UniProtKB"/>
</dbReference>
<dbReference type="GO" id="GO:1990641">
    <property type="term" value="P:response to iron ion starvation"/>
    <property type="evidence" value="ECO:0000270"/>
    <property type="project" value="UniProtKB"/>
</dbReference>
<dbReference type="GO" id="GO:0019290">
    <property type="term" value="P:siderophore biosynthetic process"/>
    <property type="evidence" value="ECO:0000314"/>
    <property type="project" value="UniProtKB"/>
</dbReference>
<dbReference type="CDD" id="cd19124">
    <property type="entry name" value="AKR_AKR4A_4B"/>
    <property type="match status" value="1"/>
</dbReference>
<dbReference type="FunFam" id="3.20.20.100:FF:000014">
    <property type="entry name" value="NAD(P)-linked oxidoreductase superfamily protein"/>
    <property type="match status" value="1"/>
</dbReference>
<dbReference type="Gene3D" id="3.20.20.100">
    <property type="entry name" value="NADP-dependent oxidoreductase domain"/>
    <property type="match status" value="1"/>
</dbReference>
<dbReference type="InterPro" id="IPR020471">
    <property type="entry name" value="AKR"/>
</dbReference>
<dbReference type="InterPro" id="IPR044497">
    <property type="entry name" value="AKR4A/B"/>
</dbReference>
<dbReference type="InterPro" id="IPR018170">
    <property type="entry name" value="Aldo/ket_reductase_CS"/>
</dbReference>
<dbReference type="InterPro" id="IPR023210">
    <property type="entry name" value="NADP_OxRdtase_dom"/>
</dbReference>
<dbReference type="InterPro" id="IPR036812">
    <property type="entry name" value="NADP_OxRdtase_dom_sf"/>
</dbReference>
<dbReference type="PANTHER" id="PTHR11732">
    <property type="entry name" value="ALDO/KETO REDUCTASE"/>
    <property type="match status" value="1"/>
</dbReference>
<dbReference type="Pfam" id="PF00248">
    <property type="entry name" value="Aldo_ket_red"/>
    <property type="match status" value="1"/>
</dbReference>
<dbReference type="PIRSF" id="PIRSF000097">
    <property type="entry name" value="AKR"/>
    <property type="match status" value="1"/>
</dbReference>
<dbReference type="PRINTS" id="PR00069">
    <property type="entry name" value="ALDKETRDTASE"/>
</dbReference>
<dbReference type="SUPFAM" id="SSF51430">
    <property type="entry name" value="NAD(P)-linked oxidoreductase"/>
    <property type="match status" value="1"/>
</dbReference>
<dbReference type="PROSITE" id="PS00798">
    <property type="entry name" value="ALDOKETO_REDUCTASE_1"/>
    <property type="match status" value="1"/>
</dbReference>
<dbReference type="PROSITE" id="PS00063">
    <property type="entry name" value="ALDOKETO_REDUCTASE_3"/>
    <property type="match status" value="1"/>
</dbReference>
<proteinExistence type="evidence at protein level"/>
<keyword id="KW-0408">Iron</keyword>
<keyword id="KW-0521">NADP</keyword>
<keyword id="KW-0560">Oxidoreductase</keyword>
<evidence type="ECO:0000250" key="1">
    <source>
        <dbReference type="UniProtKB" id="O43488"/>
    </source>
</evidence>
<evidence type="ECO:0000250" key="2">
    <source>
        <dbReference type="UniProtKB" id="Q8CG76"/>
    </source>
</evidence>
<evidence type="ECO:0000255" key="3">
    <source>
        <dbReference type="PIRSR" id="PIRSR000097-3"/>
    </source>
</evidence>
<evidence type="ECO:0000256" key="4">
    <source>
        <dbReference type="SAM" id="MobiDB-lite"/>
    </source>
</evidence>
<evidence type="ECO:0000269" key="5">
    <source>
    </source>
</evidence>
<evidence type="ECO:0000269" key="6">
    <source>
    </source>
</evidence>
<evidence type="ECO:0000303" key="7">
    <source>
    </source>
</evidence>
<evidence type="ECO:0000305" key="8"/>
<comment type="function">
    <text evidence="5 6">Catalyzes the reduction of a 3''-keto intermediate during the biosynthesis of 2'-deoxymugineic acid (DMA) from L-Met. Involved in the formation of phytosiderophores (MAs) belonging to the mugineic acid family and required to acquire iron.</text>
</comment>
<comment type="catalytic activity">
    <reaction evidence="5 6">
        <text>2'-deoxymugineate + NAD(+) = 3''-deamino-3''-oxonicotianamine + NADH + H(+)</text>
        <dbReference type="Rhea" id="RHEA:16141"/>
        <dbReference type="ChEBI" id="CHEBI:15378"/>
        <dbReference type="ChEBI" id="CHEBI:57540"/>
        <dbReference type="ChEBI" id="CHEBI:57945"/>
        <dbReference type="ChEBI" id="CHEBI:58487"/>
        <dbReference type="ChEBI" id="CHEBI:58685"/>
        <dbReference type="EC" id="1.1.1.285"/>
    </reaction>
</comment>
<comment type="catalytic activity">
    <reaction evidence="5 6">
        <text>2'-deoxymugineate + NADP(+) = 3''-deamino-3''-oxonicotianamine + NADPH + H(+)</text>
        <dbReference type="Rhea" id="RHEA:16137"/>
        <dbReference type="ChEBI" id="CHEBI:15378"/>
        <dbReference type="ChEBI" id="CHEBI:57783"/>
        <dbReference type="ChEBI" id="CHEBI:58349"/>
        <dbReference type="ChEBI" id="CHEBI:58487"/>
        <dbReference type="ChEBI" id="CHEBI:58685"/>
        <dbReference type="EC" id="1.1.1.285"/>
    </reaction>
</comment>
<comment type="biophysicochemical properties">
    <phDependence>
        <text evidence="5 6">Optimum pH is 8-9.</text>
    </phDependence>
</comment>
<comment type="pathway">
    <text evidence="6">Siderophore biosynthesis.</text>
</comment>
<comment type="induction">
    <text evidence="6">Up-regulated under iron-deficient conditions in root tissues.</text>
</comment>
<comment type="similarity">
    <text evidence="8">Belongs to the aldo/keto reductase family.</text>
</comment>
<protein>
    <recommendedName>
        <fullName evidence="7">Deoxymugineic acid synthase 1</fullName>
        <shortName evidence="7">HvDMAS1</shortName>
        <ecNumber evidence="5 6">1.1.1.285</ecNumber>
    </recommendedName>
</protein>
<gene>
    <name evidence="7" type="primary">DMAS1</name>
</gene>